<name>RNB_ENT38</name>
<proteinExistence type="inferred from homology"/>
<gene>
    <name evidence="2" type="primary">rnb</name>
    <name type="ordered locus">Ent638_2180</name>
</gene>
<accession>A4WAX5</accession>
<organism>
    <name type="scientific">Enterobacter sp. (strain 638)</name>
    <dbReference type="NCBI Taxonomy" id="399742"/>
    <lineage>
        <taxon>Bacteria</taxon>
        <taxon>Pseudomonadati</taxon>
        <taxon>Pseudomonadota</taxon>
        <taxon>Gammaproteobacteria</taxon>
        <taxon>Enterobacterales</taxon>
        <taxon>Enterobacteriaceae</taxon>
        <taxon>Enterobacter</taxon>
    </lineage>
</organism>
<evidence type="ECO:0000255" key="1"/>
<evidence type="ECO:0000255" key="2">
    <source>
        <dbReference type="HAMAP-Rule" id="MF_01036"/>
    </source>
</evidence>
<protein>
    <recommendedName>
        <fullName evidence="2">Exoribonuclease 2</fullName>
        <ecNumber evidence="2">3.1.13.1</ecNumber>
    </recommendedName>
    <alternativeName>
        <fullName evidence="2">Exoribonuclease II</fullName>
        <shortName evidence="2">RNase II</shortName>
        <shortName evidence="2">Ribonuclease II</shortName>
    </alternativeName>
</protein>
<reference key="1">
    <citation type="journal article" date="2010" name="PLoS Genet.">
        <title>Genome sequence of the plant growth promoting endophytic bacterium Enterobacter sp. 638.</title>
        <authorList>
            <person name="Taghavi S."/>
            <person name="van der Lelie D."/>
            <person name="Hoffman A."/>
            <person name="Zhang Y.B."/>
            <person name="Walla M.D."/>
            <person name="Vangronsveld J."/>
            <person name="Newman L."/>
            <person name="Monchy S."/>
        </authorList>
    </citation>
    <scope>NUCLEOTIDE SEQUENCE [LARGE SCALE GENOMIC DNA]</scope>
    <source>
        <strain>638</strain>
    </source>
</reference>
<dbReference type="EC" id="3.1.13.1" evidence="2"/>
<dbReference type="EMBL" id="CP000653">
    <property type="protein sequence ID" value="ABP60855.1"/>
    <property type="molecule type" value="Genomic_DNA"/>
</dbReference>
<dbReference type="RefSeq" id="WP_012017570.1">
    <property type="nucleotide sequence ID" value="NC_009436.1"/>
</dbReference>
<dbReference type="SMR" id="A4WAX5"/>
<dbReference type="STRING" id="399742.Ent638_2180"/>
<dbReference type="KEGG" id="ent:Ent638_2180"/>
<dbReference type="eggNOG" id="COG4776">
    <property type="taxonomic scope" value="Bacteria"/>
</dbReference>
<dbReference type="HOGENOM" id="CLU_002333_7_3_6"/>
<dbReference type="OrthoDB" id="9764149at2"/>
<dbReference type="Proteomes" id="UP000000230">
    <property type="component" value="Chromosome"/>
</dbReference>
<dbReference type="GO" id="GO:0005829">
    <property type="term" value="C:cytosol"/>
    <property type="evidence" value="ECO:0007669"/>
    <property type="project" value="TreeGrafter"/>
</dbReference>
<dbReference type="GO" id="GO:0008859">
    <property type="term" value="F:exoribonuclease II activity"/>
    <property type="evidence" value="ECO:0007669"/>
    <property type="project" value="UniProtKB-UniRule"/>
</dbReference>
<dbReference type="GO" id="GO:0003723">
    <property type="term" value="F:RNA binding"/>
    <property type="evidence" value="ECO:0007669"/>
    <property type="project" value="UniProtKB-KW"/>
</dbReference>
<dbReference type="GO" id="GO:0006402">
    <property type="term" value="P:mRNA catabolic process"/>
    <property type="evidence" value="ECO:0007669"/>
    <property type="project" value="UniProtKB-UniRule"/>
</dbReference>
<dbReference type="FunFam" id="2.40.50.140:FF:000079">
    <property type="entry name" value="Exoribonuclease 2"/>
    <property type="match status" value="1"/>
</dbReference>
<dbReference type="FunFam" id="2.40.50.140:FF:000081">
    <property type="entry name" value="Exoribonuclease 2"/>
    <property type="match status" value="1"/>
</dbReference>
<dbReference type="Gene3D" id="2.40.50.640">
    <property type="match status" value="1"/>
</dbReference>
<dbReference type="Gene3D" id="2.40.50.140">
    <property type="entry name" value="Nucleic acid-binding proteins"/>
    <property type="match status" value="2"/>
</dbReference>
<dbReference type="HAMAP" id="MF_01036">
    <property type="entry name" value="RNase_II"/>
    <property type="match status" value="1"/>
</dbReference>
<dbReference type="InterPro" id="IPR011129">
    <property type="entry name" value="CSD"/>
</dbReference>
<dbReference type="InterPro" id="IPR012340">
    <property type="entry name" value="NA-bd_OB-fold"/>
</dbReference>
<dbReference type="InterPro" id="IPR013223">
    <property type="entry name" value="RNase_B_OB_dom"/>
</dbReference>
<dbReference type="InterPro" id="IPR011804">
    <property type="entry name" value="RNase_II"/>
</dbReference>
<dbReference type="InterPro" id="IPR001900">
    <property type="entry name" value="RNase_II/R"/>
</dbReference>
<dbReference type="InterPro" id="IPR022966">
    <property type="entry name" value="RNase_II/R_CS"/>
</dbReference>
<dbReference type="InterPro" id="IPR004476">
    <property type="entry name" value="RNase_II/RNase_R"/>
</dbReference>
<dbReference type="InterPro" id="IPR050180">
    <property type="entry name" value="RNR_Ribonuclease"/>
</dbReference>
<dbReference type="InterPro" id="IPR003029">
    <property type="entry name" value="S1_domain"/>
</dbReference>
<dbReference type="NCBIfam" id="TIGR00358">
    <property type="entry name" value="3_prime_RNase"/>
    <property type="match status" value="1"/>
</dbReference>
<dbReference type="NCBIfam" id="NF003455">
    <property type="entry name" value="PRK05054.1"/>
    <property type="match status" value="1"/>
</dbReference>
<dbReference type="NCBIfam" id="TIGR02062">
    <property type="entry name" value="RNase_B"/>
    <property type="match status" value="1"/>
</dbReference>
<dbReference type="PANTHER" id="PTHR23355:SF37">
    <property type="entry name" value="EXORIBONUCLEASE 2"/>
    <property type="match status" value="1"/>
</dbReference>
<dbReference type="PANTHER" id="PTHR23355">
    <property type="entry name" value="RIBONUCLEASE"/>
    <property type="match status" value="1"/>
</dbReference>
<dbReference type="Pfam" id="PF08206">
    <property type="entry name" value="OB_RNB"/>
    <property type="match status" value="1"/>
</dbReference>
<dbReference type="Pfam" id="PF00773">
    <property type="entry name" value="RNB"/>
    <property type="match status" value="1"/>
</dbReference>
<dbReference type="Pfam" id="PF00575">
    <property type="entry name" value="S1"/>
    <property type="match status" value="1"/>
</dbReference>
<dbReference type="SMART" id="SM00357">
    <property type="entry name" value="CSP"/>
    <property type="match status" value="1"/>
</dbReference>
<dbReference type="SMART" id="SM00955">
    <property type="entry name" value="RNB"/>
    <property type="match status" value="1"/>
</dbReference>
<dbReference type="SUPFAM" id="SSF50249">
    <property type="entry name" value="Nucleic acid-binding proteins"/>
    <property type="match status" value="4"/>
</dbReference>
<dbReference type="PROSITE" id="PS01175">
    <property type="entry name" value="RIBONUCLEASE_II"/>
    <property type="match status" value="1"/>
</dbReference>
<keyword id="KW-0963">Cytoplasm</keyword>
<keyword id="KW-0269">Exonuclease</keyword>
<keyword id="KW-0378">Hydrolase</keyword>
<keyword id="KW-0540">Nuclease</keyword>
<keyword id="KW-0694">RNA-binding</keyword>
<sequence length="644" mass="72518">MLQDNPLLAQLKQQLHSQTPRAEGVVKATEKGFGFLEVDAQKSYFIPPPQMKKVMHGDRVTAVIHTQKDRETAEPEELIEPFLTRFVGKVHKKDDRLSIVPDHPLLKDAIPCRADRNCEHDFKEGDWAVAQMRRHPLKGDRGFYADLTHFITYSDDHFVPWWVTLARHNLEKEAPNGVATEMLDEGLERRDLTALNFVTIDSASTQDMDDALYVEEGADGKLHLTVAIADPTAWIAEGSKLDDSAKVRAFTNYLPGFNIPMLPRELSDDLCSLRPNQIRPVLACRMTIAADGTIEDDIEFFAATIESKAKLAYDDVSNWLEGAGNWKPESEAIAQQITLLQRVCLSRGEWRKTHALVFKDRPDYRFVLGEKGEVLDIVAEPRRIANRIVEESMIAANICAARVLRDKLGFGIYNVHTGFDPANTEALAALLKTHDVHVDPQEVLTLEGFCKLRRELDAQPSGFLDSRIRRFQSYAEISTEPGPHFGLGLEAYATWTSPIRKYGDMVNHRLLKAIVKGETIARPQDEATVQMAERRRLNRMAERDVGDWLYARFLSDKAGTDTRFAAEIIDISRGGMRVRLVENGAVAFIPAPFLHAVRDELVCSQENGSVQIKGETVYKVTDVIDVNIAEVRMETRSIIARPVV</sequence>
<feature type="chain" id="PRO_1000063888" description="Exoribonuclease 2">
    <location>
        <begin position="1"/>
        <end position="644"/>
    </location>
</feature>
<feature type="domain" description="RNB" evidence="1">
    <location>
        <begin position="189"/>
        <end position="516"/>
    </location>
</feature>
<feature type="domain" description="S1 motif" evidence="2">
    <location>
        <begin position="561"/>
        <end position="643"/>
    </location>
</feature>
<comment type="function">
    <text evidence="2">Involved in mRNA degradation. Hydrolyzes single-stranded polyribonucleotides processively in the 3' to 5' direction.</text>
</comment>
<comment type="catalytic activity">
    <reaction evidence="2">
        <text>Exonucleolytic cleavage in the 3'- to 5'-direction to yield nucleoside 5'-phosphates.</text>
        <dbReference type="EC" id="3.1.13.1"/>
    </reaction>
</comment>
<comment type="subcellular location">
    <subcellularLocation>
        <location evidence="2">Cytoplasm</location>
    </subcellularLocation>
</comment>
<comment type="similarity">
    <text evidence="2">Belongs to the RNR ribonuclease family. RNase II subfamily.</text>
</comment>